<name>RS11_CHRSD</name>
<sequence length="128" mass="13501">MANPRSNRKKVKKQVVDAVAHIHASFNNTIVTITDRQGNALSWATAGGSGFRGSRKSTPFAAQVASERAATAAAEYGVKNVDVLVKGPGPGRESAVRALNAAGFRVQSITDATPVPHNGCRPPKKRRV</sequence>
<organism>
    <name type="scientific">Chromohalobacter salexigens (strain ATCC BAA-138 / DSM 3043 / CIP 106854 / NCIMB 13768 / 1H11)</name>
    <dbReference type="NCBI Taxonomy" id="290398"/>
    <lineage>
        <taxon>Bacteria</taxon>
        <taxon>Pseudomonadati</taxon>
        <taxon>Pseudomonadota</taxon>
        <taxon>Gammaproteobacteria</taxon>
        <taxon>Oceanospirillales</taxon>
        <taxon>Halomonadaceae</taxon>
        <taxon>Chromohalobacter</taxon>
    </lineage>
</organism>
<evidence type="ECO:0000255" key="1">
    <source>
        <dbReference type="HAMAP-Rule" id="MF_01310"/>
    </source>
</evidence>
<evidence type="ECO:0000305" key="2"/>
<accession>Q1R0F2</accession>
<comment type="function">
    <text evidence="1">Located on the platform of the 30S subunit, it bridges several disparate RNA helices of the 16S rRNA. Forms part of the Shine-Dalgarno cleft in the 70S ribosome.</text>
</comment>
<comment type="subunit">
    <text evidence="1">Part of the 30S ribosomal subunit. Interacts with proteins S7 and S18. Binds to IF-3.</text>
</comment>
<comment type="similarity">
    <text evidence="1">Belongs to the universal ribosomal protein uS11 family.</text>
</comment>
<proteinExistence type="inferred from homology"/>
<keyword id="KW-1185">Reference proteome</keyword>
<keyword id="KW-0687">Ribonucleoprotein</keyword>
<keyword id="KW-0689">Ribosomal protein</keyword>
<keyword id="KW-0694">RNA-binding</keyword>
<keyword id="KW-0699">rRNA-binding</keyword>
<protein>
    <recommendedName>
        <fullName evidence="1">Small ribosomal subunit protein uS11</fullName>
    </recommendedName>
    <alternativeName>
        <fullName evidence="2">30S ribosomal protein S11</fullName>
    </alternativeName>
</protein>
<dbReference type="EMBL" id="CP000285">
    <property type="protein sequence ID" value="ABE57806.1"/>
    <property type="molecule type" value="Genomic_DNA"/>
</dbReference>
<dbReference type="RefSeq" id="WP_011505752.1">
    <property type="nucleotide sequence ID" value="NC_007963.1"/>
</dbReference>
<dbReference type="SMR" id="Q1R0F2"/>
<dbReference type="STRING" id="290398.Csal_0444"/>
<dbReference type="GeneID" id="95333196"/>
<dbReference type="KEGG" id="csa:Csal_0444"/>
<dbReference type="eggNOG" id="COG0100">
    <property type="taxonomic scope" value="Bacteria"/>
</dbReference>
<dbReference type="HOGENOM" id="CLU_072439_5_0_6"/>
<dbReference type="OrthoDB" id="9806415at2"/>
<dbReference type="Proteomes" id="UP000000239">
    <property type="component" value="Chromosome"/>
</dbReference>
<dbReference type="GO" id="GO:1990904">
    <property type="term" value="C:ribonucleoprotein complex"/>
    <property type="evidence" value="ECO:0007669"/>
    <property type="project" value="UniProtKB-KW"/>
</dbReference>
<dbReference type="GO" id="GO:0005840">
    <property type="term" value="C:ribosome"/>
    <property type="evidence" value="ECO:0007669"/>
    <property type="project" value="UniProtKB-KW"/>
</dbReference>
<dbReference type="GO" id="GO:0019843">
    <property type="term" value="F:rRNA binding"/>
    <property type="evidence" value="ECO:0007669"/>
    <property type="project" value="UniProtKB-UniRule"/>
</dbReference>
<dbReference type="GO" id="GO:0003735">
    <property type="term" value="F:structural constituent of ribosome"/>
    <property type="evidence" value="ECO:0007669"/>
    <property type="project" value="InterPro"/>
</dbReference>
<dbReference type="GO" id="GO:0006412">
    <property type="term" value="P:translation"/>
    <property type="evidence" value="ECO:0007669"/>
    <property type="project" value="UniProtKB-UniRule"/>
</dbReference>
<dbReference type="FunFam" id="3.30.420.80:FF:000001">
    <property type="entry name" value="30S ribosomal protein S11"/>
    <property type="match status" value="1"/>
</dbReference>
<dbReference type="Gene3D" id="3.30.420.80">
    <property type="entry name" value="Ribosomal protein S11"/>
    <property type="match status" value="1"/>
</dbReference>
<dbReference type="HAMAP" id="MF_01310">
    <property type="entry name" value="Ribosomal_uS11"/>
    <property type="match status" value="1"/>
</dbReference>
<dbReference type="InterPro" id="IPR001971">
    <property type="entry name" value="Ribosomal_uS11"/>
</dbReference>
<dbReference type="InterPro" id="IPR019981">
    <property type="entry name" value="Ribosomal_uS11_bac-type"/>
</dbReference>
<dbReference type="InterPro" id="IPR018102">
    <property type="entry name" value="Ribosomal_uS11_CS"/>
</dbReference>
<dbReference type="InterPro" id="IPR036967">
    <property type="entry name" value="Ribosomal_uS11_sf"/>
</dbReference>
<dbReference type="NCBIfam" id="NF003698">
    <property type="entry name" value="PRK05309.1"/>
    <property type="match status" value="1"/>
</dbReference>
<dbReference type="NCBIfam" id="TIGR03632">
    <property type="entry name" value="uS11_bact"/>
    <property type="match status" value="1"/>
</dbReference>
<dbReference type="PANTHER" id="PTHR11759">
    <property type="entry name" value="40S RIBOSOMAL PROTEIN S14/30S RIBOSOMAL PROTEIN S11"/>
    <property type="match status" value="1"/>
</dbReference>
<dbReference type="Pfam" id="PF00411">
    <property type="entry name" value="Ribosomal_S11"/>
    <property type="match status" value="1"/>
</dbReference>
<dbReference type="PIRSF" id="PIRSF002131">
    <property type="entry name" value="Ribosomal_S11"/>
    <property type="match status" value="1"/>
</dbReference>
<dbReference type="SUPFAM" id="SSF53137">
    <property type="entry name" value="Translational machinery components"/>
    <property type="match status" value="1"/>
</dbReference>
<dbReference type="PROSITE" id="PS00054">
    <property type="entry name" value="RIBOSOMAL_S11"/>
    <property type="match status" value="1"/>
</dbReference>
<gene>
    <name evidence="1" type="primary">rpsK</name>
    <name type="ordered locus">Csal_0444</name>
</gene>
<reference key="1">
    <citation type="journal article" date="2011" name="Stand. Genomic Sci.">
        <title>Complete genome sequence of the halophilic and highly halotolerant Chromohalobacter salexigens type strain (1H11(T)).</title>
        <authorList>
            <person name="Copeland A."/>
            <person name="O'Connor K."/>
            <person name="Lucas S."/>
            <person name="Lapidus A."/>
            <person name="Berry K.W."/>
            <person name="Detter J.C."/>
            <person name="Del Rio T.G."/>
            <person name="Hammon N."/>
            <person name="Dalin E."/>
            <person name="Tice H."/>
            <person name="Pitluck S."/>
            <person name="Bruce D."/>
            <person name="Goodwin L."/>
            <person name="Han C."/>
            <person name="Tapia R."/>
            <person name="Saunders E."/>
            <person name="Schmutz J."/>
            <person name="Brettin T."/>
            <person name="Larimer F."/>
            <person name="Land M."/>
            <person name="Hauser L."/>
            <person name="Vargas C."/>
            <person name="Nieto J.J."/>
            <person name="Kyrpides N.C."/>
            <person name="Ivanova N."/>
            <person name="Goker M."/>
            <person name="Klenk H.P."/>
            <person name="Csonka L.N."/>
            <person name="Woyke T."/>
        </authorList>
    </citation>
    <scope>NUCLEOTIDE SEQUENCE [LARGE SCALE GENOMIC DNA]</scope>
    <source>
        <strain>ATCC BAA-138 / DSM 3043 / CIP 106854 / NCIMB 13768 / 1H11</strain>
    </source>
</reference>
<feature type="chain" id="PRO_0000294737" description="Small ribosomal subunit protein uS11">
    <location>
        <begin position="1"/>
        <end position="128"/>
    </location>
</feature>